<organism>
    <name type="scientific">Brucella abortus (strain 2308)</name>
    <dbReference type="NCBI Taxonomy" id="359391"/>
    <lineage>
        <taxon>Bacteria</taxon>
        <taxon>Pseudomonadati</taxon>
        <taxon>Pseudomonadota</taxon>
        <taxon>Alphaproteobacteria</taxon>
        <taxon>Hyphomicrobiales</taxon>
        <taxon>Brucellaceae</taxon>
        <taxon>Brucella/Ochrobactrum group</taxon>
        <taxon>Brucella</taxon>
    </lineage>
</organism>
<comment type="function">
    <text evidence="1">Acts as a global negative controlling element, employing Fe(2+) as a cofactor to bind the operator of the repressed genes.</text>
</comment>
<comment type="subunit">
    <text evidence="1">Homodimer.</text>
</comment>
<comment type="subcellular location">
    <subcellularLocation>
        <location evidence="1">Cytoplasm</location>
    </subcellularLocation>
</comment>
<comment type="similarity">
    <text evidence="2">Belongs to the Fur family.</text>
</comment>
<feature type="chain" id="PRO_0000095545" description="Ferric uptake regulation protein">
    <location>
        <begin position="1"/>
        <end position="141"/>
    </location>
</feature>
<feature type="region of interest" description="DNA-binding" evidence="1">
    <location>
        <begin position="1"/>
        <end position="89"/>
    </location>
</feature>
<feature type="region of interest" description="Dimerization" evidence="1">
    <location>
        <begin position="90"/>
        <end position="141"/>
    </location>
</feature>
<feature type="binding site" evidence="1">
    <location>
        <position position="38"/>
    </location>
    <ligand>
        <name>Zn(2+)</name>
        <dbReference type="ChEBI" id="CHEBI:29105"/>
    </ligand>
</feature>
<feature type="binding site" evidence="1">
    <location>
        <position position="86"/>
    </location>
    <ligand>
        <name>Zn(2+)</name>
        <dbReference type="ChEBI" id="CHEBI:29105"/>
    </ligand>
</feature>
<feature type="binding site" evidence="1">
    <location>
        <position position="92"/>
    </location>
    <ligand>
        <name>Fe cation</name>
        <dbReference type="ChEBI" id="CHEBI:24875"/>
    </ligand>
</feature>
<feature type="binding site" evidence="1">
    <location>
        <position position="94"/>
    </location>
    <ligand>
        <name>Fe cation</name>
        <dbReference type="ChEBI" id="CHEBI:24875"/>
    </ligand>
</feature>
<feature type="binding site" evidence="1">
    <location>
        <position position="95"/>
    </location>
    <ligand>
        <name>Zn(2+)</name>
        <dbReference type="ChEBI" id="CHEBI:29105"/>
    </ligand>
</feature>
<feature type="binding site" evidence="1">
    <location>
        <position position="106"/>
    </location>
    <ligand>
        <name>Zn(2+)</name>
        <dbReference type="ChEBI" id="CHEBI:29105"/>
    </ligand>
</feature>
<feature type="binding site" evidence="1">
    <location>
        <position position="113"/>
    </location>
    <ligand>
        <name>Fe cation</name>
        <dbReference type="ChEBI" id="CHEBI:24875"/>
    </ligand>
</feature>
<feature type="binding site" evidence="1">
    <location>
        <position position="130"/>
    </location>
    <ligand>
        <name>Fe cation</name>
        <dbReference type="ChEBI" id="CHEBI:24875"/>
    </ligand>
</feature>
<reference key="1">
    <citation type="submission" date="1997-09" db="EMBL/GenBank/DDBJ databases">
        <title>Identification of the ferric uptake regulator (Fur) homolog from Brucella abortus.</title>
        <authorList>
            <person name="Phillips R.W."/>
            <person name="Kovach M.E."/>
            <person name="Bellaire B.H."/>
            <person name="Baldwin C.L."/>
            <person name="Elzer P.H."/>
            <person name="Roop R.M. II"/>
        </authorList>
    </citation>
    <scope>NUCLEOTIDE SEQUENCE [GENOMIC DNA]</scope>
</reference>
<reference key="2">
    <citation type="journal article" date="2005" name="Infect. Immun.">
        <title>Whole-genome analyses of speciation events in pathogenic Brucellae.</title>
        <authorList>
            <person name="Chain P.S."/>
            <person name="Comerci D.J."/>
            <person name="Tolmasky M.E."/>
            <person name="Larimer F.W."/>
            <person name="Malfatti S.A."/>
            <person name="Vergez L.M."/>
            <person name="Aguero F."/>
            <person name="Land M.L."/>
            <person name="Ugalde R.A."/>
            <person name="Garcia E."/>
        </authorList>
    </citation>
    <scope>NUCLEOTIDE SEQUENCE [LARGE SCALE GENOMIC DNA]</scope>
    <source>
        <strain>2308</strain>
    </source>
</reference>
<keyword id="KW-0963">Cytoplasm</keyword>
<keyword id="KW-0238">DNA-binding</keyword>
<keyword id="KW-0408">Iron</keyword>
<keyword id="KW-0479">Metal-binding</keyword>
<keyword id="KW-1185">Reference proteome</keyword>
<keyword id="KW-0678">Repressor</keyword>
<keyword id="KW-0804">Transcription</keyword>
<keyword id="KW-0805">Transcription regulation</keyword>
<keyword id="KW-0862">Zinc</keyword>
<name>FUR_BRUA2</name>
<proteinExistence type="inferred from homology"/>
<sequence>MNKPYTKPDYEQELRRAGVRITRPRRIILNILNETEDHPDALEIFRRAVEEDDSISLSTVYRTMKLLEERGAIHRHAFAGGPSRFEQASGAHHDHIIDMDSGDVVEFHSDKIEKLQEEIARSLGFEIVHHRLELYCKKLKS</sequence>
<protein>
    <recommendedName>
        <fullName>Ferric uptake regulation protein</fullName>
        <shortName>Ferric uptake regulator</shortName>
    </recommendedName>
</protein>
<gene>
    <name type="primary">fur</name>
    <name type="ordered locus">BAB1_1668</name>
</gene>
<dbReference type="EMBL" id="AF023177">
    <property type="protein sequence ID" value="AAB81452.1"/>
    <property type="molecule type" value="Genomic_DNA"/>
</dbReference>
<dbReference type="EMBL" id="AM040264">
    <property type="protein sequence ID" value="CAJ11624.1"/>
    <property type="molecule type" value="Genomic_DNA"/>
</dbReference>
<dbReference type="RefSeq" id="WP_002964746.1">
    <property type="nucleotide sequence ID" value="NZ_KN046823.1"/>
</dbReference>
<dbReference type="SMR" id="Q2YRK0"/>
<dbReference type="STRING" id="359391.BAB1_1668"/>
<dbReference type="KEGG" id="bmf:BAB1_1668"/>
<dbReference type="PATRIC" id="fig|359391.11.peg.184"/>
<dbReference type="HOGENOM" id="CLU_096072_3_2_5"/>
<dbReference type="PhylomeDB" id="Q2YRK0"/>
<dbReference type="Proteomes" id="UP000002719">
    <property type="component" value="Chromosome I"/>
</dbReference>
<dbReference type="GO" id="GO:0005829">
    <property type="term" value="C:cytosol"/>
    <property type="evidence" value="ECO:0007669"/>
    <property type="project" value="TreeGrafter"/>
</dbReference>
<dbReference type="GO" id="GO:0003700">
    <property type="term" value="F:DNA-binding transcription factor activity"/>
    <property type="evidence" value="ECO:0007669"/>
    <property type="project" value="InterPro"/>
</dbReference>
<dbReference type="GO" id="GO:0000976">
    <property type="term" value="F:transcription cis-regulatory region binding"/>
    <property type="evidence" value="ECO:0007669"/>
    <property type="project" value="TreeGrafter"/>
</dbReference>
<dbReference type="GO" id="GO:0008270">
    <property type="term" value="F:zinc ion binding"/>
    <property type="evidence" value="ECO:0007669"/>
    <property type="project" value="TreeGrafter"/>
</dbReference>
<dbReference type="GO" id="GO:0045892">
    <property type="term" value="P:negative regulation of DNA-templated transcription"/>
    <property type="evidence" value="ECO:0007669"/>
    <property type="project" value="TreeGrafter"/>
</dbReference>
<dbReference type="GO" id="GO:1900376">
    <property type="term" value="P:regulation of secondary metabolite biosynthetic process"/>
    <property type="evidence" value="ECO:0007669"/>
    <property type="project" value="TreeGrafter"/>
</dbReference>
<dbReference type="CDD" id="cd07153">
    <property type="entry name" value="Fur_like"/>
    <property type="match status" value="1"/>
</dbReference>
<dbReference type="Gene3D" id="3.30.1490.190">
    <property type="match status" value="1"/>
</dbReference>
<dbReference type="Gene3D" id="1.10.10.10">
    <property type="entry name" value="Winged helix-like DNA-binding domain superfamily/Winged helix DNA-binding domain"/>
    <property type="match status" value="1"/>
</dbReference>
<dbReference type="InterPro" id="IPR002481">
    <property type="entry name" value="FUR"/>
</dbReference>
<dbReference type="InterPro" id="IPR043135">
    <property type="entry name" value="Fur_C"/>
</dbReference>
<dbReference type="InterPro" id="IPR036388">
    <property type="entry name" value="WH-like_DNA-bd_sf"/>
</dbReference>
<dbReference type="InterPro" id="IPR036390">
    <property type="entry name" value="WH_DNA-bd_sf"/>
</dbReference>
<dbReference type="PANTHER" id="PTHR33202:SF2">
    <property type="entry name" value="FERRIC UPTAKE REGULATION PROTEIN"/>
    <property type="match status" value="1"/>
</dbReference>
<dbReference type="PANTHER" id="PTHR33202">
    <property type="entry name" value="ZINC UPTAKE REGULATION PROTEIN"/>
    <property type="match status" value="1"/>
</dbReference>
<dbReference type="Pfam" id="PF01475">
    <property type="entry name" value="FUR"/>
    <property type="match status" value="1"/>
</dbReference>
<dbReference type="SUPFAM" id="SSF46785">
    <property type="entry name" value="Winged helix' DNA-binding domain"/>
    <property type="match status" value="1"/>
</dbReference>
<evidence type="ECO:0000250" key="1"/>
<evidence type="ECO:0000305" key="2"/>
<accession>Q2YRK0</accession>
<accession>O30976</accession>
<accession>Q57BM3</accession>